<organism>
    <name type="scientific">Oryza sativa subsp. japonica</name>
    <name type="common">Rice</name>
    <dbReference type="NCBI Taxonomy" id="39947"/>
    <lineage>
        <taxon>Eukaryota</taxon>
        <taxon>Viridiplantae</taxon>
        <taxon>Streptophyta</taxon>
        <taxon>Embryophyta</taxon>
        <taxon>Tracheophyta</taxon>
        <taxon>Spermatophyta</taxon>
        <taxon>Magnoliopsida</taxon>
        <taxon>Liliopsida</taxon>
        <taxon>Poales</taxon>
        <taxon>Poaceae</taxon>
        <taxon>BOP clade</taxon>
        <taxon>Oryzoideae</taxon>
        <taxon>Oryzeae</taxon>
        <taxon>Oryzinae</taxon>
        <taxon>Oryza</taxon>
        <taxon>Oryza sativa</taxon>
    </lineage>
</organism>
<keyword id="KW-0438">Lignin biosynthesis</keyword>
<keyword id="KW-0479">Metal-binding</keyword>
<keyword id="KW-0521">NADP</keyword>
<keyword id="KW-0560">Oxidoreductase</keyword>
<keyword id="KW-1185">Reference proteome</keyword>
<keyword id="KW-0862">Zinc</keyword>
<name>CADH4_ORYSJ</name>
<reference key="1">
    <citation type="journal article" date="2005" name="BMC Biol.">
        <title>The sequence of rice chromosomes 11 and 12, rich in disease resistance genes and recent gene duplications.</title>
        <authorList>
            <consortium name="The rice chromosomes 11 and 12 sequencing consortia"/>
        </authorList>
    </citation>
    <scope>NUCLEOTIDE SEQUENCE [LARGE SCALE GENOMIC DNA]</scope>
    <source>
        <strain>cv. Nipponbare</strain>
    </source>
</reference>
<reference key="2">
    <citation type="journal article" date="2005" name="Nature">
        <title>The map-based sequence of the rice genome.</title>
        <authorList>
            <consortium name="International rice genome sequencing project (IRGSP)"/>
        </authorList>
    </citation>
    <scope>NUCLEOTIDE SEQUENCE [LARGE SCALE GENOMIC DNA]</scope>
    <source>
        <strain>cv. Nipponbare</strain>
    </source>
</reference>
<reference key="3">
    <citation type="journal article" date="2008" name="Nucleic Acids Res.">
        <title>The rice annotation project database (RAP-DB): 2008 update.</title>
        <authorList>
            <consortium name="The rice annotation project (RAP)"/>
        </authorList>
    </citation>
    <scope>GENOME REANNOTATION</scope>
    <source>
        <strain>cv. Nipponbare</strain>
    </source>
</reference>
<reference key="4">
    <citation type="journal article" date="2013" name="Rice">
        <title>Improvement of the Oryza sativa Nipponbare reference genome using next generation sequence and optical map data.</title>
        <authorList>
            <person name="Kawahara Y."/>
            <person name="de la Bastide M."/>
            <person name="Hamilton J.P."/>
            <person name="Kanamori H."/>
            <person name="McCombie W.R."/>
            <person name="Ouyang S."/>
            <person name="Schwartz D.C."/>
            <person name="Tanaka T."/>
            <person name="Wu J."/>
            <person name="Zhou S."/>
            <person name="Childs K.L."/>
            <person name="Davidson R.M."/>
            <person name="Lin H."/>
            <person name="Quesada-Ocampo L."/>
            <person name="Vaillancourt B."/>
            <person name="Sakai H."/>
            <person name="Lee S.S."/>
            <person name="Kim J."/>
            <person name="Numa H."/>
            <person name="Itoh T."/>
            <person name="Buell C.R."/>
            <person name="Matsumoto T."/>
        </authorList>
    </citation>
    <scope>GENOME REANNOTATION</scope>
    <source>
        <strain>cv. Nipponbare</strain>
    </source>
</reference>
<reference key="5">
    <citation type="journal article" date="2005" name="Planta">
        <title>Structure of the cinnamyl-alcohol dehydrogenase gene family in rice and promoter activity of a member associated with lignification.</title>
        <authorList>
            <person name="Tobias C.M."/>
            <person name="Chow E.K."/>
        </authorList>
    </citation>
    <scope>GENE FAMILY</scope>
    <scope>NOMENCLATURE</scope>
</reference>
<accession>Q2R114</accession>
<accession>A0A0P0Y4L1</accession>
<accession>Q0IRJ9</accession>
<evidence type="ECO:0000250" key="1">
    <source>
        <dbReference type="UniProtKB" id="O49482"/>
    </source>
</evidence>
<evidence type="ECO:0000303" key="2">
    <source>
    </source>
</evidence>
<evidence type="ECO:0000305" key="3"/>
<sequence length="354" mass="38635">MAAECGSGNCDAWAARDPSGILSPYKFNRREVQSEDVSLRITHCGVCYADVIWTRNMFNDSIYPLVPGHEIAGVVTEVGADVKGFKVGDHVGVGVYVNSCQDCENCNSSLENHCSKCVVTYNSVDSDGTVTKGGYSSHILVHQRYCFKIPADYPLSKAAPLLCAGITVYTPMIRHNMNQPGKSLGVIGLGGLGHMAVKFGKAFGLKVTVFSTSESKREEAINLLGADNFVISSDENQMESLKSSLHFIIDTASGDHQFDPYLSLLKVGGVMVLLSFPSEIKVHPENLNLAARSLAGSVTGGTKDIQEMINFCAANNVYPDIEMIKIDYVNEALQRLINRDVRFRFVIDIENSFK</sequence>
<dbReference type="EC" id="1.1.1.195" evidence="1"/>
<dbReference type="EMBL" id="AC104845">
    <property type="status" value="NOT_ANNOTATED_CDS"/>
    <property type="molecule type" value="Genomic_DNA"/>
</dbReference>
<dbReference type="EMBL" id="DP000010">
    <property type="protein sequence ID" value="ABA94833.1"/>
    <property type="status" value="ALT_SEQ"/>
    <property type="molecule type" value="Genomic_DNA"/>
</dbReference>
<dbReference type="EMBL" id="AP008217">
    <property type="protein sequence ID" value="BAF28666.2"/>
    <property type="status" value="ALT_SEQ"/>
    <property type="molecule type" value="Genomic_DNA"/>
</dbReference>
<dbReference type="EMBL" id="AP014967">
    <property type="protein sequence ID" value="BAT14915.1"/>
    <property type="molecule type" value="Genomic_DNA"/>
</dbReference>
<dbReference type="SMR" id="Q2R114"/>
<dbReference type="FunCoup" id="Q2R114">
    <property type="interactions" value="162"/>
</dbReference>
<dbReference type="STRING" id="39947.Q2R114"/>
<dbReference type="PaxDb" id="39947-Q2R114"/>
<dbReference type="EnsemblPlants" id="Os11t0622800-00">
    <property type="protein sequence ID" value="Os11t0622800-00"/>
    <property type="gene ID" value="Os11g0622800"/>
</dbReference>
<dbReference type="Gramene" id="Os11t0622800-00">
    <property type="protein sequence ID" value="Os11t0622800-00"/>
    <property type="gene ID" value="Os11g0622800"/>
</dbReference>
<dbReference type="KEGG" id="dosa:Os11g0622800"/>
<dbReference type="eggNOG" id="KOG0023">
    <property type="taxonomic scope" value="Eukaryota"/>
</dbReference>
<dbReference type="HOGENOM" id="CLU_026673_20_2_1"/>
<dbReference type="InParanoid" id="Q2R114"/>
<dbReference type="OMA" id="DIKTECC"/>
<dbReference type="UniPathway" id="UPA00711"/>
<dbReference type="Proteomes" id="UP000000763">
    <property type="component" value="Chromosome 11"/>
</dbReference>
<dbReference type="Proteomes" id="UP000059680">
    <property type="component" value="Chromosome 11"/>
</dbReference>
<dbReference type="GO" id="GO:0045551">
    <property type="term" value="F:cinnamyl-alcohol dehydrogenase activity"/>
    <property type="evidence" value="ECO:0007669"/>
    <property type="project" value="UniProtKB-EC"/>
</dbReference>
<dbReference type="GO" id="GO:0050268">
    <property type="term" value="F:coniferyl-alcohol dehydrogenase activity"/>
    <property type="evidence" value="ECO:0007669"/>
    <property type="project" value="RHEA"/>
</dbReference>
<dbReference type="GO" id="GO:0016616">
    <property type="term" value="F:oxidoreductase activity, acting on the CH-OH group of donors, NAD or NADP as acceptor"/>
    <property type="evidence" value="ECO:0000318"/>
    <property type="project" value="GO_Central"/>
</dbReference>
<dbReference type="GO" id="GO:0008270">
    <property type="term" value="F:zinc ion binding"/>
    <property type="evidence" value="ECO:0007669"/>
    <property type="project" value="InterPro"/>
</dbReference>
<dbReference type="GO" id="GO:0009809">
    <property type="term" value="P:lignin biosynthetic process"/>
    <property type="evidence" value="ECO:0007669"/>
    <property type="project" value="UniProtKB-KW"/>
</dbReference>
<dbReference type="CDD" id="cd05283">
    <property type="entry name" value="CAD1"/>
    <property type="match status" value="1"/>
</dbReference>
<dbReference type="FunFam" id="3.40.50.720:FF:000022">
    <property type="entry name" value="Cinnamyl alcohol dehydrogenase"/>
    <property type="match status" value="1"/>
</dbReference>
<dbReference type="FunFam" id="3.90.180.10:FF:000004">
    <property type="entry name" value="probable cinnamyl alcohol dehydrogenase"/>
    <property type="match status" value="1"/>
</dbReference>
<dbReference type="Gene3D" id="3.90.180.10">
    <property type="entry name" value="Medium-chain alcohol dehydrogenases, catalytic domain"/>
    <property type="match status" value="1"/>
</dbReference>
<dbReference type="Gene3D" id="3.40.50.720">
    <property type="entry name" value="NAD(P)-binding Rossmann-like Domain"/>
    <property type="match status" value="1"/>
</dbReference>
<dbReference type="InterPro" id="IPR013149">
    <property type="entry name" value="ADH-like_C"/>
</dbReference>
<dbReference type="InterPro" id="IPR013154">
    <property type="entry name" value="ADH-like_N"/>
</dbReference>
<dbReference type="InterPro" id="IPR002328">
    <property type="entry name" value="ADH_Zn_CS"/>
</dbReference>
<dbReference type="InterPro" id="IPR047109">
    <property type="entry name" value="CAD-like"/>
</dbReference>
<dbReference type="InterPro" id="IPR029752">
    <property type="entry name" value="D-isomer_DH_CS1"/>
</dbReference>
<dbReference type="InterPro" id="IPR011032">
    <property type="entry name" value="GroES-like_sf"/>
</dbReference>
<dbReference type="InterPro" id="IPR036291">
    <property type="entry name" value="NAD(P)-bd_dom_sf"/>
</dbReference>
<dbReference type="InterPro" id="IPR020843">
    <property type="entry name" value="PKS_ER"/>
</dbReference>
<dbReference type="PANTHER" id="PTHR42683">
    <property type="entry name" value="ALDEHYDE REDUCTASE"/>
    <property type="match status" value="1"/>
</dbReference>
<dbReference type="Pfam" id="PF08240">
    <property type="entry name" value="ADH_N"/>
    <property type="match status" value="1"/>
</dbReference>
<dbReference type="Pfam" id="PF00107">
    <property type="entry name" value="ADH_zinc_N"/>
    <property type="match status" value="1"/>
</dbReference>
<dbReference type="SMART" id="SM00829">
    <property type="entry name" value="PKS_ER"/>
    <property type="match status" value="1"/>
</dbReference>
<dbReference type="SUPFAM" id="SSF50129">
    <property type="entry name" value="GroES-like"/>
    <property type="match status" value="1"/>
</dbReference>
<dbReference type="SUPFAM" id="SSF51735">
    <property type="entry name" value="NAD(P)-binding Rossmann-fold domains"/>
    <property type="match status" value="1"/>
</dbReference>
<dbReference type="PROSITE" id="PS00059">
    <property type="entry name" value="ADH_ZINC"/>
    <property type="match status" value="1"/>
</dbReference>
<feature type="chain" id="PRO_0000382643" description="Putative cinnamyl alcohol dehydrogenase 4">
    <location>
        <begin position="1"/>
        <end position="354"/>
    </location>
</feature>
<feature type="binding site" evidence="1">
    <location>
        <position position="47"/>
    </location>
    <ligand>
        <name>Zn(2+)</name>
        <dbReference type="ChEBI" id="CHEBI:29105"/>
        <label>1</label>
        <note>catalytic</note>
    </ligand>
</feature>
<feature type="binding site" evidence="1">
    <location>
        <position position="69"/>
    </location>
    <ligand>
        <name>Zn(2+)</name>
        <dbReference type="ChEBI" id="CHEBI:29105"/>
        <label>1</label>
        <note>catalytic</note>
    </ligand>
</feature>
<feature type="binding site" evidence="1">
    <location>
        <position position="70"/>
    </location>
    <ligand>
        <name>Zn(2+)</name>
        <dbReference type="ChEBI" id="CHEBI:29105"/>
        <label>1</label>
        <note>catalytic</note>
    </ligand>
</feature>
<feature type="binding site" evidence="1">
    <location>
        <position position="100"/>
    </location>
    <ligand>
        <name>Zn(2+)</name>
        <dbReference type="ChEBI" id="CHEBI:29105"/>
        <label>2</label>
    </ligand>
</feature>
<feature type="binding site" evidence="1">
    <location>
        <position position="103"/>
    </location>
    <ligand>
        <name>Zn(2+)</name>
        <dbReference type="ChEBI" id="CHEBI:29105"/>
        <label>2</label>
    </ligand>
</feature>
<feature type="binding site" evidence="1">
    <location>
        <position position="106"/>
    </location>
    <ligand>
        <name>Zn(2+)</name>
        <dbReference type="ChEBI" id="CHEBI:29105"/>
        <label>2</label>
    </ligand>
</feature>
<feature type="binding site" evidence="1">
    <location>
        <position position="114"/>
    </location>
    <ligand>
        <name>Zn(2+)</name>
        <dbReference type="ChEBI" id="CHEBI:29105"/>
        <label>2</label>
    </ligand>
</feature>
<feature type="binding site" evidence="1">
    <location>
        <position position="163"/>
    </location>
    <ligand>
        <name>Zn(2+)</name>
        <dbReference type="ChEBI" id="CHEBI:29105"/>
        <label>1</label>
        <note>catalytic</note>
    </ligand>
</feature>
<feature type="binding site" evidence="1">
    <location>
        <position position="167"/>
    </location>
    <ligand>
        <name>NADP(+)</name>
        <dbReference type="ChEBI" id="CHEBI:58349"/>
    </ligand>
</feature>
<feature type="binding site" evidence="1">
    <location>
        <begin position="188"/>
        <end position="193"/>
    </location>
    <ligand>
        <name>NADP(+)</name>
        <dbReference type="ChEBI" id="CHEBI:58349"/>
    </ligand>
</feature>
<feature type="binding site" evidence="1">
    <location>
        <begin position="211"/>
        <end position="216"/>
    </location>
    <ligand>
        <name>NADP(+)</name>
        <dbReference type="ChEBI" id="CHEBI:58349"/>
    </ligand>
</feature>
<feature type="binding site" evidence="1">
    <location>
        <position position="251"/>
    </location>
    <ligand>
        <name>NADP(+)</name>
        <dbReference type="ChEBI" id="CHEBI:58349"/>
    </ligand>
</feature>
<feature type="binding site" evidence="1">
    <location>
        <begin position="297"/>
        <end position="299"/>
    </location>
    <ligand>
        <name>NADP(+)</name>
        <dbReference type="ChEBI" id="CHEBI:58349"/>
    </ligand>
</feature>
<gene>
    <name evidence="2" type="primary">CAD4</name>
    <name type="ordered locus">Os11g0622800</name>
    <name type="ordered locus">LOC_Os11g40690</name>
</gene>
<comment type="function">
    <text evidence="1">Involved in lignin biosynthesis. Catalyzes the final step specific for the production of lignin monomers. Catalyzes the NADPH-dependent reduction of coniferaldehyde, 5-hydroxyconiferaldehyde, sinapaldehyde, 4-coumaraldehyde and caffeyl aldehyde to their respective alcohols.</text>
</comment>
<comment type="catalytic activity">
    <reaction evidence="1">
        <text>(E)-cinnamyl alcohol + NADP(+) = (E)-cinnamaldehyde + NADPH + H(+)</text>
        <dbReference type="Rhea" id="RHEA:10392"/>
        <dbReference type="ChEBI" id="CHEBI:15378"/>
        <dbReference type="ChEBI" id="CHEBI:16731"/>
        <dbReference type="ChEBI" id="CHEBI:33227"/>
        <dbReference type="ChEBI" id="CHEBI:57783"/>
        <dbReference type="ChEBI" id="CHEBI:58349"/>
        <dbReference type="EC" id="1.1.1.195"/>
    </reaction>
    <physiologicalReaction direction="right-to-left" evidence="1">
        <dbReference type="Rhea" id="RHEA:10394"/>
    </physiologicalReaction>
</comment>
<comment type="catalytic activity">
    <reaction evidence="1">
        <text>(E)-coniferol + NADP(+) = (E)-coniferaldehyde + NADPH + H(+)</text>
        <dbReference type="Rhea" id="RHEA:22444"/>
        <dbReference type="ChEBI" id="CHEBI:15378"/>
        <dbReference type="ChEBI" id="CHEBI:16547"/>
        <dbReference type="ChEBI" id="CHEBI:17745"/>
        <dbReference type="ChEBI" id="CHEBI:57783"/>
        <dbReference type="ChEBI" id="CHEBI:58349"/>
        <dbReference type="EC" id="1.1.1.195"/>
    </reaction>
    <physiologicalReaction direction="right-to-left" evidence="1">
        <dbReference type="Rhea" id="RHEA:22446"/>
    </physiologicalReaction>
</comment>
<comment type="catalytic activity">
    <reaction evidence="1">
        <text>(E)-sinapyl alcohol + NADP(+) = (E)-sinapaldehyde + NADPH + H(+)</text>
        <dbReference type="Rhea" id="RHEA:45704"/>
        <dbReference type="ChEBI" id="CHEBI:15378"/>
        <dbReference type="ChEBI" id="CHEBI:27949"/>
        <dbReference type="ChEBI" id="CHEBI:57783"/>
        <dbReference type="ChEBI" id="CHEBI:58349"/>
        <dbReference type="ChEBI" id="CHEBI:64557"/>
        <dbReference type="EC" id="1.1.1.195"/>
    </reaction>
    <physiologicalReaction direction="right-to-left" evidence="1">
        <dbReference type="Rhea" id="RHEA:45706"/>
    </physiologicalReaction>
</comment>
<comment type="catalytic activity">
    <reaction evidence="1">
        <text>(E)-4-coumaroyl alcohol + NADP(+) = (E)-4-coumaraldehyde + NADPH + H(+)</text>
        <dbReference type="Rhea" id="RHEA:45724"/>
        <dbReference type="ChEBI" id="CHEBI:15378"/>
        <dbReference type="ChEBI" id="CHEBI:28353"/>
        <dbReference type="ChEBI" id="CHEBI:57783"/>
        <dbReference type="ChEBI" id="CHEBI:58349"/>
        <dbReference type="ChEBI" id="CHEBI:64555"/>
        <dbReference type="EC" id="1.1.1.195"/>
    </reaction>
    <physiologicalReaction direction="right-to-left" evidence="1">
        <dbReference type="Rhea" id="RHEA:45726"/>
    </physiologicalReaction>
</comment>
<comment type="catalytic activity">
    <reaction evidence="1">
        <text>(E)-caffeyl alcohol + NADP(+) = (E)-caffeyl aldehyde + NADPH + H(+)</text>
        <dbReference type="Rhea" id="RHEA:45728"/>
        <dbReference type="ChEBI" id="CHEBI:15378"/>
        <dbReference type="ChEBI" id="CHEBI:28323"/>
        <dbReference type="ChEBI" id="CHEBI:31334"/>
        <dbReference type="ChEBI" id="CHEBI:57783"/>
        <dbReference type="ChEBI" id="CHEBI:58349"/>
    </reaction>
    <physiologicalReaction direction="right-to-left" evidence="1">
        <dbReference type="Rhea" id="RHEA:45730"/>
    </physiologicalReaction>
</comment>
<comment type="cofactor">
    <cofactor evidence="1">
        <name>Zn(2+)</name>
        <dbReference type="ChEBI" id="CHEBI:29105"/>
    </cofactor>
    <text evidence="1">Binds 2 Zn(2+) ions per subunit.</text>
</comment>
<comment type="pathway">
    <text evidence="1">Aromatic compound metabolism; phenylpropanoid biosynthesis.</text>
</comment>
<comment type="subunit">
    <text evidence="1">Homodimer.</text>
</comment>
<comment type="similarity">
    <text evidence="3">Belongs to the zinc-containing alcohol dehydrogenase family.</text>
</comment>
<comment type="sequence caution" evidence="3">
    <conflict type="erroneous gene model prediction">
        <sequence resource="EMBL-CDS" id="ABA94833"/>
    </conflict>
</comment>
<comment type="sequence caution" evidence="3">
    <conflict type="erroneous gene model prediction">
        <sequence resource="EMBL-CDS" id="BAF28666"/>
    </conflict>
</comment>
<proteinExistence type="inferred from homology"/>
<protein>
    <recommendedName>
        <fullName evidence="3">Putative cinnamyl alcohol dehydrogenase 4</fullName>
        <shortName evidence="2">OsCAD4</shortName>
        <ecNumber evidence="1">1.1.1.195</ecNumber>
    </recommendedName>
</protein>